<accession>Q8ZHF5</accession>
<accession>Q0WI97</accession>
<accession>Q8CZV3</accession>
<keyword id="KW-1185">Reference proteome</keyword>
<name>Y944_YERPE</name>
<sequence length="96" mass="10571">MSAVLSTENGLILKLYIQPKASRDQIVGLHGDELKVAITAPPVDGQANTHLVKFIAKQFRVAKSQVIIEKGELGRHKQIKVINPQQIPPEVTILLE</sequence>
<proteinExistence type="inferred from homology"/>
<dbReference type="EMBL" id="AL590842">
    <property type="protein sequence ID" value="CAL19610.1"/>
    <property type="molecule type" value="Genomic_DNA"/>
</dbReference>
<dbReference type="EMBL" id="AE009952">
    <property type="protein sequence ID" value="AAM86880.1"/>
    <property type="status" value="ALT_INIT"/>
    <property type="molecule type" value="Genomic_DNA"/>
</dbReference>
<dbReference type="EMBL" id="AE017042">
    <property type="protein sequence ID" value="AAS63652.1"/>
    <property type="status" value="ALT_INIT"/>
    <property type="molecule type" value="Genomic_DNA"/>
</dbReference>
<dbReference type="PIR" id="AH0115">
    <property type="entry name" value="AH0115"/>
</dbReference>
<dbReference type="RefSeq" id="YP_002345991.1">
    <property type="nucleotide sequence ID" value="NC_003143.1"/>
</dbReference>
<dbReference type="SMR" id="Q8ZHF5"/>
<dbReference type="STRING" id="214092.YPO0944"/>
<dbReference type="PaxDb" id="214092-YPO0944"/>
<dbReference type="EnsemblBacteria" id="AAS63652">
    <property type="protein sequence ID" value="AAS63652"/>
    <property type="gene ID" value="YP_3498"/>
</dbReference>
<dbReference type="KEGG" id="ype:YPO0944"/>
<dbReference type="KEGG" id="ypj:CH55_3598"/>
<dbReference type="KEGG" id="ypk:y3330"/>
<dbReference type="KEGG" id="ypl:CH46_4203"/>
<dbReference type="KEGG" id="ypm:YP_3498"/>
<dbReference type="KEGG" id="ypv:BZ15_2631"/>
<dbReference type="KEGG" id="ypw:CH59_922"/>
<dbReference type="PATRIC" id="fig|214092.21.peg.1222"/>
<dbReference type="eggNOG" id="COG1872">
    <property type="taxonomic scope" value="Bacteria"/>
</dbReference>
<dbReference type="HOGENOM" id="CLU_130694_5_0_6"/>
<dbReference type="OMA" id="AANKQCV"/>
<dbReference type="OrthoDB" id="9800587at2"/>
<dbReference type="Proteomes" id="UP000000815">
    <property type="component" value="Chromosome"/>
</dbReference>
<dbReference type="Proteomes" id="UP000001019">
    <property type="component" value="Chromosome"/>
</dbReference>
<dbReference type="Proteomes" id="UP000002490">
    <property type="component" value="Chromosome"/>
</dbReference>
<dbReference type="GO" id="GO:0005737">
    <property type="term" value="C:cytoplasm"/>
    <property type="evidence" value="ECO:0000318"/>
    <property type="project" value="GO_Central"/>
</dbReference>
<dbReference type="Gene3D" id="3.30.1200.10">
    <property type="entry name" value="YggU-like"/>
    <property type="match status" value="1"/>
</dbReference>
<dbReference type="HAMAP" id="MF_00634">
    <property type="entry name" value="UPF0235"/>
    <property type="match status" value="1"/>
</dbReference>
<dbReference type="InterPro" id="IPR003746">
    <property type="entry name" value="DUF167"/>
</dbReference>
<dbReference type="InterPro" id="IPR036591">
    <property type="entry name" value="YggU-like_sf"/>
</dbReference>
<dbReference type="NCBIfam" id="TIGR00251">
    <property type="entry name" value="DUF167 family protein"/>
    <property type="match status" value="1"/>
</dbReference>
<dbReference type="NCBIfam" id="NF003466">
    <property type="entry name" value="PRK05090.1"/>
    <property type="match status" value="1"/>
</dbReference>
<dbReference type="PANTHER" id="PTHR13420">
    <property type="entry name" value="UPF0235 PROTEIN C15ORF40"/>
    <property type="match status" value="1"/>
</dbReference>
<dbReference type="PANTHER" id="PTHR13420:SF7">
    <property type="entry name" value="UPF0235 PROTEIN C15ORF40"/>
    <property type="match status" value="1"/>
</dbReference>
<dbReference type="Pfam" id="PF02594">
    <property type="entry name" value="DUF167"/>
    <property type="match status" value="1"/>
</dbReference>
<dbReference type="SMART" id="SM01152">
    <property type="entry name" value="DUF167"/>
    <property type="match status" value="1"/>
</dbReference>
<dbReference type="SUPFAM" id="SSF69786">
    <property type="entry name" value="YggU-like"/>
    <property type="match status" value="1"/>
</dbReference>
<comment type="similarity">
    <text evidence="1">Belongs to the UPF0235 family.</text>
</comment>
<comment type="sequence caution" evidence="2">
    <conflict type="erroneous initiation">
        <sequence resource="EMBL-CDS" id="AAM86880"/>
    </conflict>
</comment>
<comment type="sequence caution" evidence="2">
    <conflict type="erroneous initiation">
        <sequence resource="EMBL-CDS" id="AAS63652"/>
    </conflict>
</comment>
<organism>
    <name type="scientific">Yersinia pestis</name>
    <dbReference type="NCBI Taxonomy" id="632"/>
    <lineage>
        <taxon>Bacteria</taxon>
        <taxon>Pseudomonadati</taxon>
        <taxon>Pseudomonadota</taxon>
        <taxon>Gammaproteobacteria</taxon>
        <taxon>Enterobacterales</taxon>
        <taxon>Yersiniaceae</taxon>
        <taxon>Yersinia</taxon>
    </lineage>
</organism>
<protein>
    <recommendedName>
        <fullName evidence="1">UPF0235 protein YPO0944/y3330/YP_3498</fullName>
    </recommendedName>
</protein>
<feature type="chain" id="PRO_0000139464" description="UPF0235 protein YPO0944/y3330/YP_3498">
    <location>
        <begin position="1"/>
        <end position="96"/>
    </location>
</feature>
<evidence type="ECO:0000255" key="1">
    <source>
        <dbReference type="HAMAP-Rule" id="MF_00634"/>
    </source>
</evidence>
<evidence type="ECO:0000305" key="2"/>
<reference key="1">
    <citation type="journal article" date="2001" name="Nature">
        <title>Genome sequence of Yersinia pestis, the causative agent of plague.</title>
        <authorList>
            <person name="Parkhill J."/>
            <person name="Wren B.W."/>
            <person name="Thomson N.R."/>
            <person name="Titball R.W."/>
            <person name="Holden M.T.G."/>
            <person name="Prentice M.B."/>
            <person name="Sebaihia M."/>
            <person name="James K.D."/>
            <person name="Churcher C.M."/>
            <person name="Mungall K.L."/>
            <person name="Baker S."/>
            <person name="Basham D."/>
            <person name="Bentley S.D."/>
            <person name="Brooks K."/>
            <person name="Cerdeno-Tarraga A.-M."/>
            <person name="Chillingworth T."/>
            <person name="Cronin A."/>
            <person name="Davies R.M."/>
            <person name="Davis P."/>
            <person name="Dougan G."/>
            <person name="Feltwell T."/>
            <person name="Hamlin N."/>
            <person name="Holroyd S."/>
            <person name="Jagels K."/>
            <person name="Karlyshev A.V."/>
            <person name="Leather S."/>
            <person name="Moule S."/>
            <person name="Oyston P.C.F."/>
            <person name="Quail M.A."/>
            <person name="Rutherford K.M."/>
            <person name="Simmonds M."/>
            <person name="Skelton J."/>
            <person name="Stevens K."/>
            <person name="Whitehead S."/>
            <person name="Barrell B.G."/>
        </authorList>
    </citation>
    <scope>NUCLEOTIDE SEQUENCE [LARGE SCALE GENOMIC DNA]</scope>
    <source>
        <strain>CO-92 / Biovar Orientalis</strain>
    </source>
</reference>
<reference key="2">
    <citation type="journal article" date="2002" name="J. Bacteriol.">
        <title>Genome sequence of Yersinia pestis KIM.</title>
        <authorList>
            <person name="Deng W."/>
            <person name="Burland V."/>
            <person name="Plunkett G. III"/>
            <person name="Boutin A."/>
            <person name="Mayhew G.F."/>
            <person name="Liss P."/>
            <person name="Perna N.T."/>
            <person name="Rose D.J."/>
            <person name="Mau B."/>
            <person name="Zhou S."/>
            <person name="Schwartz D.C."/>
            <person name="Fetherston J.D."/>
            <person name="Lindler L.E."/>
            <person name="Brubaker R.R."/>
            <person name="Plano G.V."/>
            <person name="Straley S.C."/>
            <person name="McDonough K.A."/>
            <person name="Nilles M.L."/>
            <person name="Matson J.S."/>
            <person name="Blattner F.R."/>
            <person name="Perry R.D."/>
        </authorList>
    </citation>
    <scope>NUCLEOTIDE SEQUENCE [LARGE SCALE GENOMIC DNA]</scope>
    <source>
        <strain>KIM10+ / Biovar Mediaevalis</strain>
    </source>
</reference>
<reference key="3">
    <citation type="journal article" date="2004" name="DNA Res.">
        <title>Complete genome sequence of Yersinia pestis strain 91001, an isolate avirulent to humans.</title>
        <authorList>
            <person name="Song Y."/>
            <person name="Tong Z."/>
            <person name="Wang J."/>
            <person name="Wang L."/>
            <person name="Guo Z."/>
            <person name="Han Y."/>
            <person name="Zhang J."/>
            <person name="Pei D."/>
            <person name="Zhou D."/>
            <person name="Qin H."/>
            <person name="Pang X."/>
            <person name="Han Y."/>
            <person name="Zhai J."/>
            <person name="Li M."/>
            <person name="Cui B."/>
            <person name="Qi Z."/>
            <person name="Jin L."/>
            <person name="Dai R."/>
            <person name="Chen F."/>
            <person name="Li S."/>
            <person name="Ye C."/>
            <person name="Du Z."/>
            <person name="Lin W."/>
            <person name="Wang J."/>
            <person name="Yu J."/>
            <person name="Yang H."/>
            <person name="Wang J."/>
            <person name="Huang P."/>
            <person name="Yang R."/>
        </authorList>
    </citation>
    <scope>NUCLEOTIDE SEQUENCE [LARGE SCALE GENOMIC DNA]</scope>
    <source>
        <strain>91001 / Biovar Mediaevalis</strain>
    </source>
</reference>
<gene>
    <name type="ordered locus">YPO0944</name>
    <name type="ordered locus">y3330</name>
    <name type="ordered locus">YP_3498</name>
</gene>